<proteinExistence type="inferred from homology"/>
<reference key="1">
    <citation type="journal article" date="2002" name="Genome Res.">
        <title>The genome of Methanosarcina acetivorans reveals extensive metabolic and physiological diversity.</title>
        <authorList>
            <person name="Galagan J.E."/>
            <person name="Nusbaum C."/>
            <person name="Roy A."/>
            <person name="Endrizzi M.G."/>
            <person name="Macdonald P."/>
            <person name="FitzHugh W."/>
            <person name="Calvo S."/>
            <person name="Engels R."/>
            <person name="Smirnov S."/>
            <person name="Atnoor D."/>
            <person name="Brown A."/>
            <person name="Allen N."/>
            <person name="Naylor J."/>
            <person name="Stange-Thomann N."/>
            <person name="DeArellano K."/>
            <person name="Johnson R."/>
            <person name="Linton L."/>
            <person name="McEwan P."/>
            <person name="McKernan K."/>
            <person name="Talamas J."/>
            <person name="Tirrell A."/>
            <person name="Ye W."/>
            <person name="Zimmer A."/>
            <person name="Barber R.D."/>
            <person name="Cann I."/>
            <person name="Graham D.E."/>
            <person name="Grahame D.A."/>
            <person name="Guss A.M."/>
            <person name="Hedderich R."/>
            <person name="Ingram-Smith C."/>
            <person name="Kuettner H.C."/>
            <person name="Krzycki J.A."/>
            <person name="Leigh J.A."/>
            <person name="Li W."/>
            <person name="Liu J."/>
            <person name="Mukhopadhyay B."/>
            <person name="Reeve J.N."/>
            <person name="Smith K."/>
            <person name="Springer T.A."/>
            <person name="Umayam L.A."/>
            <person name="White O."/>
            <person name="White R.H."/>
            <person name="de Macario E.C."/>
            <person name="Ferry J.G."/>
            <person name="Jarrell K.F."/>
            <person name="Jing H."/>
            <person name="Macario A.J.L."/>
            <person name="Paulsen I.T."/>
            <person name="Pritchett M."/>
            <person name="Sowers K.R."/>
            <person name="Swanson R.V."/>
            <person name="Zinder S.H."/>
            <person name="Lander E."/>
            <person name="Metcalf W.W."/>
            <person name="Birren B."/>
        </authorList>
    </citation>
    <scope>NUCLEOTIDE SEQUENCE [LARGE SCALE GENOMIC DNA]</scope>
    <source>
        <strain>ATCC 35395 / DSM 2834 / JCM 12185 / C2A</strain>
    </source>
</reference>
<comment type="function">
    <text evidence="1">Allows the formation of correctly charged Gln-tRNA(Gln) through the transamidation of misacylated Glu-tRNA(Gln) in organisms which lack glutaminyl-tRNA synthetase. The reaction takes place in the presence of glutamine and ATP through an activated gamma-phospho-Glu-tRNA(Gln). The GatDE system is specific for glutamate and does not act on aspartate.</text>
</comment>
<comment type="catalytic activity">
    <reaction evidence="1">
        <text>L-glutamyl-tRNA(Gln) + L-glutamine + ATP + H2O = L-glutaminyl-tRNA(Gln) + L-glutamate + ADP + phosphate + H(+)</text>
        <dbReference type="Rhea" id="RHEA:17521"/>
        <dbReference type="Rhea" id="RHEA-COMP:9681"/>
        <dbReference type="Rhea" id="RHEA-COMP:9684"/>
        <dbReference type="ChEBI" id="CHEBI:15377"/>
        <dbReference type="ChEBI" id="CHEBI:15378"/>
        <dbReference type="ChEBI" id="CHEBI:29985"/>
        <dbReference type="ChEBI" id="CHEBI:30616"/>
        <dbReference type="ChEBI" id="CHEBI:43474"/>
        <dbReference type="ChEBI" id="CHEBI:58359"/>
        <dbReference type="ChEBI" id="CHEBI:78520"/>
        <dbReference type="ChEBI" id="CHEBI:78521"/>
        <dbReference type="ChEBI" id="CHEBI:456216"/>
    </reaction>
</comment>
<comment type="subunit">
    <text evidence="1">Heterodimer of GatD and GatE.</text>
</comment>
<comment type="similarity">
    <text evidence="1">Belongs to the asparaginase 1 family. GatD subfamily.</text>
</comment>
<dbReference type="EC" id="6.3.5.-" evidence="1"/>
<dbReference type="EMBL" id="AE010299">
    <property type="protein sequence ID" value="AAM04734.1"/>
    <property type="molecule type" value="Genomic_DNA"/>
</dbReference>
<dbReference type="RefSeq" id="WP_011021336.1">
    <property type="nucleotide sequence ID" value="NC_003552.1"/>
</dbReference>
<dbReference type="SMR" id="Q8TR66"/>
<dbReference type="FunCoup" id="Q8TR66">
    <property type="interactions" value="36"/>
</dbReference>
<dbReference type="STRING" id="188937.MA_1317"/>
<dbReference type="EnsemblBacteria" id="AAM04734">
    <property type="protein sequence ID" value="AAM04734"/>
    <property type="gene ID" value="MA_1317"/>
</dbReference>
<dbReference type="GeneID" id="1473205"/>
<dbReference type="KEGG" id="mac:MA_1317"/>
<dbReference type="HOGENOM" id="CLU_019134_2_1_2"/>
<dbReference type="InParanoid" id="Q8TR66"/>
<dbReference type="OrthoDB" id="371959at2157"/>
<dbReference type="PhylomeDB" id="Q8TR66"/>
<dbReference type="Proteomes" id="UP000002487">
    <property type="component" value="Chromosome"/>
</dbReference>
<dbReference type="GO" id="GO:0004067">
    <property type="term" value="F:asparaginase activity"/>
    <property type="evidence" value="ECO:0007669"/>
    <property type="project" value="InterPro"/>
</dbReference>
<dbReference type="GO" id="GO:0005524">
    <property type="term" value="F:ATP binding"/>
    <property type="evidence" value="ECO:0007669"/>
    <property type="project" value="UniProtKB-KW"/>
</dbReference>
<dbReference type="GO" id="GO:0050567">
    <property type="term" value="F:glutaminyl-tRNA synthase (glutamine-hydrolyzing) activity"/>
    <property type="evidence" value="ECO:0007669"/>
    <property type="project" value="UniProtKB-UniRule"/>
</dbReference>
<dbReference type="GO" id="GO:0006520">
    <property type="term" value="P:amino acid metabolic process"/>
    <property type="evidence" value="ECO:0007669"/>
    <property type="project" value="InterPro"/>
</dbReference>
<dbReference type="GO" id="GO:0006450">
    <property type="term" value="P:regulation of translational fidelity"/>
    <property type="evidence" value="ECO:0007669"/>
    <property type="project" value="InterPro"/>
</dbReference>
<dbReference type="GO" id="GO:0006412">
    <property type="term" value="P:translation"/>
    <property type="evidence" value="ECO:0007669"/>
    <property type="project" value="UniProtKB-UniRule"/>
</dbReference>
<dbReference type="CDD" id="cd08962">
    <property type="entry name" value="GatD"/>
    <property type="match status" value="1"/>
</dbReference>
<dbReference type="FunFam" id="3.40.50.1170:FF:000001">
    <property type="entry name" value="L-asparaginase 2"/>
    <property type="match status" value="1"/>
</dbReference>
<dbReference type="Gene3D" id="2.30.30.520">
    <property type="match status" value="1"/>
</dbReference>
<dbReference type="Gene3D" id="3.40.50.40">
    <property type="match status" value="1"/>
</dbReference>
<dbReference type="Gene3D" id="3.40.50.1170">
    <property type="entry name" value="L-asparaginase, N-terminal domain"/>
    <property type="match status" value="1"/>
</dbReference>
<dbReference type="HAMAP" id="MF_00586">
    <property type="entry name" value="GatD"/>
    <property type="match status" value="1"/>
</dbReference>
<dbReference type="InterPro" id="IPR006033">
    <property type="entry name" value="AsnA_fam"/>
</dbReference>
<dbReference type="InterPro" id="IPR036152">
    <property type="entry name" value="Asp/glu_Ase-like_sf"/>
</dbReference>
<dbReference type="InterPro" id="IPR006034">
    <property type="entry name" value="Asparaginase/glutaminase-like"/>
</dbReference>
<dbReference type="InterPro" id="IPR020827">
    <property type="entry name" value="Asparaginase/glutaminase_AS1"/>
</dbReference>
<dbReference type="InterPro" id="IPR027475">
    <property type="entry name" value="Asparaginase/glutaminase_AS2"/>
</dbReference>
<dbReference type="InterPro" id="IPR040919">
    <property type="entry name" value="Asparaginase_C"/>
</dbReference>
<dbReference type="InterPro" id="IPR011878">
    <property type="entry name" value="GatD"/>
</dbReference>
<dbReference type="InterPro" id="IPR040918">
    <property type="entry name" value="GatD_N"/>
</dbReference>
<dbReference type="InterPro" id="IPR037222">
    <property type="entry name" value="GatD_N_sf"/>
</dbReference>
<dbReference type="InterPro" id="IPR027473">
    <property type="entry name" value="L-asparaginase_C"/>
</dbReference>
<dbReference type="InterPro" id="IPR027474">
    <property type="entry name" value="L-asparaginase_N"/>
</dbReference>
<dbReference type="InterPro" id="IPR037152">
    <property type="entry name" value="L-asparaginase_N_sf"/>
</dbReference>
<dbReference type="NCBIfam" id="TIGR00519">
    <property type="entry name" value="asnASE_I"/>
    <property type="match status" value="1"/>
</dbReference>
<dbReference type="NCBIfam" id="TIGR02153">
    <property type="entry name" value="gatD_arch"/>
    <property type="match status" value="1"/>
</dbReference>
<dbReference type="NCBIfam" id="NF003217">
    <property type="entry name" value="PRK04183.1"/>
    <property type="match status" value="1"/>
</dbReference>
<dbReference type="PANTHER" id="PTHR11707:SF28">
    <property type="entry name" value="60 KDA LYSOPHOSPHOLIPASE"/>
    <property type="match status" value="1"/>
</dbReference>
<dbReference type="PANTHER" id="PTHR11707">
    <property type="entry name" value="L-ASPARAGINASE"/>
    <property type="match status" value="1"/>
</dbReference>
<dbReference type="Pfam" id="PF00710">
    <property type="entry name" value="Asparaginase"/>
    <property type="match status" value="1"/>
</dbReference>
<dbReference type="Pfam" id="PF17763">
    <property type="entry name" value="Asparaginase_C"/>
    <property type="match status" value="1"/>
</dbReference>
<dbReference type="Pfam" id="PF18195">
    <property type="entry name" value="GatD_N"/>
    <property type="match status" value="1"/>
</dbReference>
<dbReference type="PIRSF" id="PIRSF500175">
    <property type="entry name" value="Glu_ADT_D"/>
    <property type="match status" value="1"/>
</dbReference>
<dbReference type="PIRSF" id="PIRSF001220">
    <property type="entry name" value="L-ASNase_gatD"/>
    <property type="match status" value="1"/>
</dbReference>
<dbReference type="PRINTS" id="PR00139">
    <property type="entry name" value="ASNGLNASE"/>
</dbReference>
<dbReference type="SMART" id="SM00870">
    <property type="entry name" value="Asparaginase"/>
    <property type="match status" value="1"/>
</dbReference>
<dbReference type="SUPFAM" id="SSF141300">
    <property type="entry name" value="GatD N-terminal domain-like"/>
    <property type="match status" value="1"/>
</dbReference>
<dbReference type="SUPFAM" id="SSF53774">
    <property type="entry name" value="Glutaminase/Asparaginase"/>
    <property type="match status" value="1"/>
</dbReference>
<dbReference type="PROSITE" id="PS00144">
    <property type="entry name" value="ASN_GLN_ASE_1"/>
    <property type="match status" value="1"/>
</dbReference>
<dbReference type="PROSITE" id="PS00917">
    <property type="entry name" value="ASN_GLN_ASE_2"/>
    <property type="match status" value="1"/>
</dbReference>
<dbReference type="PROSITE" id="PS51732">
    <property type="entry name" value="ASN_GLN_ASE_3"/>
    <property type="match status" value="1"/>
</dbReference>
<accession>Q8TR66</accession>
<feature type="chain" id="PRO_0000140051" description="Glutamyl-tRNA(Gln) amidotransferase subunit D">
    <location>
        <begin position="1"/>
        <end position="424"/>
    </location>
</feature>
<feature type="domain" description="Asparaginase/glutaminase" evidence="2">
    <location>
        <begin position="84"/>
        <end position="413"/>
    </location>
</feature>
<feature type="region of interest" description="Disordered" evidence="3">
    <location>
        <begin position="56"/>
        <end position="78"/>
    </location>
</feature>
<feature type="active site" evidence="1">
    <location>
        <position position="94"/>
    </location>
</feature>
<feature type="active site" evidence="1">
    <location>
        <position position="170"/>
    </location>
</feature>
<feature type="active site" evidence="1">
    <location>
        <position position="171"/>
    </location>
</feature>
<feature type="active site" evidence="1">
    <location>
        <position position="247"/>
    </location>
</feature>
<evidence type="ECO:0000255" key="1">
    <source>
        <dbReference type="HAMAP-Rule" id="MF_00586"/>
    </source>
</evidence>
<evidence type="ECO:0000255" key="2">
    <source>
        <dbReference type="PROSITE-ProRule" id="PRU01068"/>
    </source>
</evidence>
<evidence type="ECO:0000256" key="3">
    <source>
        <dbReference type="SAM" id="MobiDB-lite"/>
    </source>
</evidence>
<keyword id="KW-0067">ATP-binding</keyword>
<keyword id="KW-0436">Ligase</keyword>
<keyword id="KW-0547">Nucleotide-binding</keyword>
<keyword id="KW-0648">Protein biosynthesis</keyword>
<keyword id="KW-1185">Reference proteome</keyword>
<organism>
    <name type="scientific">Methanosarcina acetivorans (strain ATCC 35395 / DSM 2834 / JCM 12185 / C2A)</name>
    <dbReference type="NCBI Taxonomy" id="188937"/>
    <lineage>
        <taxon>Archaea</taxon>
        <taxon>Methanobacteriati</taxon>
        <taxon>Methanobacteriota</taxon>
        <taxon>Stenosarchaea group</taxon>
        <taxon>Methanomicrobia</taxon>
        <taxon>Methanosarcinales</taxon>
        <taxon>Methanosarcinaceae</taxon>
        <taxon>Methanosarcina</taxon>
    </lineage>
</organism>
<name>GATD_METAC</name>
<protein>
    <recommendedName>
        <fullName evidence="1">Glutamyl-tRNA(Gln) amidotransferase subunit D</fullName>
        <shortName evidence="1">Glu-ADT subunit D</shortName>
        <ecNumber evidence="1">6.3.5.-</ecNumber>
    </recommendedName>
</protein>
<sequence length="424" mass="46108">MEFKQGDWVRIERNGTVYEGKVMPSMEGYITIKMKSGYNAGFSIDKVRITLLENNGETANGSRNGGKGCKTNEEELPEPGKKLPKIAILSTGGTIASKIDYRTGAVTSQFTADDILAAIPELKEIADFKGRVISSILSENMDSDSWQNLSKAVVEEIEAGADGVIVTHGTDTMMYSAAALSFMIKTPVPIVFVGSQRSADRPSSDNAMNAICAARVAISDIAEVVVVMHGTTSDDFCEIHRGTKVRKLHTSRRDAFKSVNSLPVGTVDYGTGEIKTFIDYTRRGEKALKFKPGMEPKCALVKFTPGADPTVLDYYISNGYKGLVVEGTGLGHISTKWIPLLRKATDAKMPVIVTSQCLNGRICDRVYDTGRDMLKAGAIEGEDTLPETALVKLMWVLGQTDDFEKAAGMLREDLSGEITECTQR</sequence>
<gene>
    <name evidence="1" type="primary">gatD</name>
    <name type="synonym">ansA</name>
    <name type="ordered locus">MA_1317</name>
</gene>